<dbReference type="EC" id="6.3.4.5" evidence="1"/>
<dbReference type="EMBL" id="CP000570">
    <property type="protein sequence ID" value="ABN83344.1"/>
    <property type="molecule type" value="Genomic_DNA"/>
</dbReference>
<dbReference type="RefSeq" id="WP_004189990.1">
    <property type="nucleotide sequence ID" value="NC_009074.1"/>
</dbReference>
<dbReference type="SMR" id="A3N4T7"/>
<dbReference type="GeneID" id="93058813"/>
<dbReference type="KEGG" id="bpd:BURPS668_0305"/>
<dbReference type="HOGENOM" id="CLU_032784_4_1_4"/>
<dbReference type="UniPathway" id="UPA00068">
    <property type="reaction ID" value="UER00113"/>
</dbReference>
<dbReference type="GO" id="GO:0005737">
    <property type="term" value="C:cytoplasm"/>
    <property type="evidence" value="ECO:0007669"/>
    <property type="project" value="UniProtKB-SubCell"/>
</dbReference>
<dbReference type="GO" id="GO:0004055">
    <property type="term" value="F:argininosuccinate synthase activity"/>
    <property type="evidence" value="ECO:0007669"/>
    <property type="project" value="UniProtKB-UniRule"/>
</dbReference>
<dbReference type="GO" id="GO:0005524">
    <property type="term" value="F:ATP binding"/>
    <property type="evidence" value="ECO:0007669"/>
    <property type="project" value="UniProtKB-UniRule"/>
</dbReference>
<dbReference type="GO" id="GO:0042803">
    <property type="term" value="F:protein homodimerization activity"/>
    <property type="evidence" value="ECO:0007669"/>
    <property type="project" value="InterPro"/>
</dbReference>
<dbReference type="GO" id="GO:0000053">
    <property type="term" value="P:argininosuccinate metabolic process"/>
    <property type="evidence" value="ECO:0007669"/>
    <property type="project" value="TreeGrafter"/>
</dbReference>
<dbReference type="GO" id="GO:0006526">
    <property type="term" value="P:L-arginine biosynthetic process"/>
    <property type="evidence" value="ECO:0007669"/>
    <property type="project" value="UniProtKB-UniRule"/>
</dbReference>
<dbReference type="GO" id="GO:0000050">
    <property type="term" value="P:urea cycle"/>
    <property type="evidence" value="ECO:0007669"/>
    <property type="project" value="TreeGrafter"/>
</dbReference>
<dbReference type="CDD" id="cd01999">
    <property type="entry name" value="ASS"/>
    <property type="match status" value="1"/>
</dbReference>
<dbReference type="FunFam" id="1.10.287.400:FF:000001">
    <property type="entry name" value="Argininosuccinate synthase"/>
    <property type="match status" value="1"/>
</dbReference>
<dbReference type="Gene3D" id="1.10.287.400">
    <property type="match status" value="1"/>
</dbReference>
<dbReference type="Gene3D" id="3.90.1260.10">
    <property type="entry name" value="Argininosuccinate synthetase, chain A, domain 2"/>
    <property type="match status" value="1"/>
</dbReference>
<dbReference type="Gene3D" id="3.40.50.620">
    <property type="entry name" value="HUPs"/>
    <property type="match status" value="1"/>
</dbReference>
<dbReference type="HAMAP" id="MF_00581">
    <property type="entry name" value="Arg_succ_synth_type2"/>
    <property type="match status" value="1"/>
</dbReference>
<dbReference type="InterPro" id="IPR023437">
    <property type="entry name" value="Arg_succ_synth_type2_subfam"/>
</dbReference>
<dbReference type="InterPro" id="IPR048268">
    <property type="entry name" value="Arginosuc_syn_C"/>
</dbReference>
<dbReference type="InterPro" id="IPR048267">
    <property type="entry name" value="Arginosuc_syn_N"/>
</dbReference>
<dbReference type="InterPro" id="IPR001518">
    <property type="entry name" value="Arginosuc_synth"/>
</dbReference>
<dbReference type="InterPro" id="IPR018223">
    <property type="entry name" value="Arginosuc_synth_CS"/>
</dbReference>
<dbReference type="InterPro" id="IPR023434">
    <property type="entry name" value="Arginosuc_synth_type_1_subfam"/>
</dbReference>
<dbReference type="InterPro" id="IPR024074">
    <property type="entry name" value="AS_cat/multimer_dom_body"/>
</dbReference>
<dbReference type="InterPro" id="IPR024073">
    <property type="entry name" value="AS_multimer_C_tail"/>
</dbReference>
<dbReference type="InterPro" id="IPR014729">
    <property type="entry name" value="Rossmann-like_a/b/a_fold"/>
</dbReference>
<dbReference type="NCBIfam" id="TIGR00032">
    <property type="entry name" value="argG"/>
    <property type="match status" value="1"/>
</dbReference>
<dbReference type="NCBIfam" id="NF003779">
    <property type="entry name" value="PRK05370.1"/>
    <property type="match status" value="1"/>
</dbReference>
<dbReference type="PANTHER" id="PTHR11587">
    <property type="entry name" value="ARGININOSUCCINATE SYNTHASE"/>
    <property type="match status" value="1"/>
</dbReference>
<dbReference type="PANTHER" id="PTHR11587:SF2">
    <property type="entry name" value="ARGININOSUCCINATE SYNTHASE"/>
    <property type="match status" value="1"/>
</dbReference>
<dbReference type="Pfam" id="PF20979">
    <property type="entry name" value="Arginosuc_syn_C"/>
    <property type="match status" value="1"/>
</dbReference>
<dbReference type="Pfam" id="PF00764">
    <property type="entry name" value="Arginosuc_synth"/>
    <property type="match status" value="1"/>
</dbReference>
<dbReference type="SUPFAM" id="SSF52402">
    <property type="entry name" value="Adenine nucleotide alpha hydrolases-like"/>
    <property type="match status" value="1"/>
</dbReference>
<dbReference type="SUPFAM" id="SSF69864">
    <property type="entry name" value="Argininosuccinate synthetase, C-terminal domain"/>
    <property type="match status" value="1"/>
</dbReference>
<dbReference type="PROSITE" id="PS00564">
    <property type="entry name" value="ARGININOSUCCIN_SYN_1"/>
    <property type="match status" value="1"/>
</dbReference>
<dbReference type="PROSITE" id="PS00565">
    <property type="entry name" value="ARGININOSUCCIN_SYN_2"/>
    <property type="match status" value="1"/>
</dbReference>
<comment type="catalytic activity">
    <reaction evidence="1">
        <text>L-citrulline + L-aspartate + ATP = 2-(N(omega)-L-arginino)succinate + AMP + diphosphate + H(+)</text>
        <dbReference type="Rhea" id="RHEA:10932"/>
        <dbReference type="ChEBI" id="CHEBI:15378"/>
        <dbReference type="ChEBI" id="CHEBI:29991"/>
        <dbReference type="ChEBI" id="CHEBI:30616"/>
        <dbReference type="ChEBI" id="CHEBI:33019"/>
        <dbReference type="ChEBI" id="CHEBI:57472"/>
        <dbReference type="ChEBI" id="CHEBI:57743"/>
        <dbReference type="ChEBI" id="CHEBI:456215"/>
        <dbReference type="EC" id="6.3.4.5"/>
    </reaction>
</comment>
<comment type="pathway">
    <text evidence="1">Amino-acid biosynthesis; L-arginine biosynthesis; L-arginine from L-ornithine and carbamoyl phosphate: step 2/3.</text>
</comment>
<comment type="subunit">
    <text evidence="1">Homotetramer.</text>
</comment>
<comment type="subcellular location">
    <subcellularLocation>
        <location evidence="1">Cytoplasm</location>
    </subcellularLocation>
</comment>
<comment type="similarity">
    <text evidence="1">Belongs to the argininosuccinate synthase family. Type 2 subfamily.</text>
</comment>
<feature type="chain" id="PRO_1000025417" description="Argininosuccinate synthase">
    <location>
        <begin position="1"/>
        <end position="446"/>
    </location>
</feature>
<feature type="binding site" evidence="1">
    <location>
        <begin position="17"/>
        <end position="25"/>
    </location>
    <ligand>
        <name>ATP</name>
        <dbReference type="ChEBI" id="CHEBI:30616"/>
    </ligand>
</feature>
<feature type="binding site" evidence="1">
    <location>
        <position position="43"/>
    </location>
    <ligand>
        <name>ATP</name>
        <dbReference type="ChEBI" id="CHEBI:30616"/>
    </ligand>
</feature>
<feature type="binding site" evidence="1">
    <location>
        <position position="99"/>
    </location>
    <ligand>
        <name>L-citrulline</name>
        <dbReference type="ChEBI" id="CHEBI:57743"/>
    </ligand>
</feature>
<feature type="binding site" evidence="1">
    <location>
        <position position="129"/>
    </location>
    <ligand>
        <name>ATP</name>
        <dbReference type="ChEBI" id="CHEBI:30616"/>
    </ligand>
</feature>
<feature type="binding site" evidence="1">
    <location>
        <position position="131"/>
    </location>
    <ligand>
        <name>ATP</name>
        <dbReference type="ChEBI" id="CHEBI:30616"/>
    </ligand>
</feature>
<feature type="binding site" evidence="1">
    <location>
        <position position="131"/>
    </location>
    <ligand>
        <name>L-aspartate</name>
        <dbReference type="ChEBI" id="CHEBI:29991"/>
    </ligand>
</feature>
<feature type="binding site" evidence="1">
    <location>
        <position position="135"/>
    </location>
    <ligand>
        <name>L-aspartate</name>
        <dbReference type="ChEBI" id="CHEBI:29991"/>
    </ligand>
</feature>
<feature type="binding site" evidence="1">
    <location>
        <position position="135"/>
    </location>
    <ligand>
        <name>L-citrulline</name>
        <dbReference type="ChEBI" id="CHEBI:57743"/>
    </ligand>
</feature>
<feature type="binding site" evidence="1">
    <location>
        <position position="136"/>
    </location>
    <ligand>
        <name>ATP</name>
        <dbReference type="ChEBI" id="CHEBI:30616"/>
    </ligand>
</feature>
<feature type="binding site" evidence="1">
    <location>
        <position position="136"/>
    </location>
    <ligand>
        <name>L-aspartate</name>
        <dbReference type="ChEBI" id="CHEBI:29991"/>
    </ligand>
</feature>
<feature type="binding site" evidence="1">
    <location>
        <position position="139"/>
    </location>
    <ligand>
        <name>L-citrulline</name>
        <dbReference type="ChEBI" id="CHEBI:57743"/>
    </ligand>
</feature>
<feature type="binding site" evidence="1">
    <location>
        <position position="192"/>
    </location>
    <ligand>
        <name>L-citrulline</name>
        <dbReference type="ChEBI" id="CHEBI:57743"/>
    </ligand>
</feature>
<feature type="binding site" evidence="1">
    <location>
        <position position="194"/>
    </location>
    <ligand>
        <name>ATP</name>
        <dbReference type="ChEBI" id="CHEBI:30616"/>
    </ligand>
</feature>
<feature type="binding site" evidence="1">
    <location>
        <position position="201"/>
    </location>
    <ligand>
        <name>L-citrulline</name>
        <dbReference type="ChEBI" id="CHEBI:57743"/>
    </ligand>
</feature>
<feature type="binding site" evidence="1">
    <location>
        <position position="203"/>
    </location>
    <ligand>
        <name>L-citrulline</name>
        <dbReference type="ChEBI" id="CHEBI:57743"/>
    </ligand>
</feature>
<feature type="binding site" evidence="1">
    <location>
        <position position="280"/>
    </location>
    <ligand>
        <name>L-citrulline</name>
        <dbReference type="ChEBI" id="CHEBI:57743"/>
    </ligand>
</feature>
<reference key="1">
    <citation type="journal article" date="2010" name="Genome Biol. Evol.">
        <title>Continuing evolution of Burkholderia mallei through genome reduction and large-scale rearrangements.</title>
        <authorList>
            <person name="Losada L."/>
            <person name="Ronning C.M."/>
            <person name="DeShazer D."/>
            <person name="Woods D."/>
            <person name="Fedorova N."/>
            <person name="Kim H.S."/>
            <person name="Shabalina S.A."/>
            <person name="Pearson T.R."/>
            <person name="Brinkac L."/>
            <person name="Tan P."/>
            <person name="Nandi T."/>
            <person name="Crabtree J."/>
            <person name="Badger J."/>
            <person name="Beckstrom-Sternberg S."/>
            <person name="Saqib M."/>
            <person name="Schutzer S.E."/>
            <person name="Keim P."/>
            <person name="Nierman W.C."/>
        </authorList>
    </citation>
    <scope>NUCLEOTIDE SEQUENCE [LARGE SCALE GENOMIC DNA]</scope>
    <source>
        <strain>668</strain>
    </source>
</reference>
<organism>
    <name type="scientific">Burkholderia pseudomallei (strain 668)</name>
    <dbReference type="NCBI Taxonomy" id="320373"/>
    <lineage>
        <taxon>Bacteria</taxon>
        <taxon>Pseudomonadati</taxon>
        <taxon>Pseudomonadota</taxon>
        <taxon>Betaproteobacteria</taxon>
        <taxon>Burkholderiales</taxon>
        <taxon>Burkholderiaceae</taxon>
        <taxon>Burkholderia</taxon>
        <taxon>pseudomallei group</taxon>
    </lineage>
</organism>
<proteinExistence type="inferred from homology"/>
<name>ASSY_BURP6</name>
<gene>
    <name evidence="1" type="primary">argG</name>
    <name type="ordered locus">BURPS668_0305</name>
</gene>
<sequence length="446" mass="49697">MTTILENLPAGQKVGIAFSGGLDTSAALHWMRIKGAVPYAYTANLGQPDEDDYDAIPKRAIQYGAEGARLIDCRAQLVAEGIAALQCGAFHISTAGVTYFNTTPIGRAVTGTMLVAAMKEDGVNIWGDGSTYKGNDIERFYRYGLLVNPDLKIYKPWLDQQFIDELGGRAEMSEFMRQAGFEYKMSAEKAYSTDSNLLGATHEAKDLESLESGIKIVNPIMGVAFWRDDVKIDKEEVTIRFEEGRPVALNGVEYKDAVALLLEANRIGGRHGLGMSDQIENRIIEAKSRGIYEAPGLALLYIAYERLVTGIHNEDTIEQYRENGRRLGRLLYQGRWFDPQAIMLRETAQRWVARAVTGEVTVELRRGNDYSIIGTRSPNLTYQPERLSMEKVQSMFSPRDRIGQLTMRNLDITDTRDKLRIYSQVGLLAAGESSALPKLKEDESGN</sequence>
<accession>A3N4T7</accession>
<evidence type="ECO:0000255" key="1">
    <source>
        <dbReference type="HAMAP-Rule" id="MF_00581"/>
    </source>
</evidence>
<keyword id="KW-0028">Amino-acid biosynthesis</keyword>
<keyword id="KW-0055">Arginine biosynthesis</keyword>
<keyword id="KW-0067">ATP-binding</keyword>
<keyword id="KW-0963">Cytoplasm</keyword>
<keyword id="KW-0436">Ligase</keyword>
<keyword id="KW-0547">Nucleotide-binding</keyword>
<protein>
    <recommendedName>
        <fullName evidence="1">Argininosuccinate synthase</fullName>
        <ecNumber evidence="1">6.3.4.5</ecNumber>
    </recommendedName>
    <alternativeName>
        <fullName evidence="1">Citrulline--aspartate ligase</fullName>
    </alternativeName>
</protein>